<accession>B2UVU0</accession>
<keyword id="KW-0067">ATP-binding</keyword>
<keyword id="KW-0963">Cytoplasm</keyword>
<keyword id="KW-0418">Kinase</keyword>
<keyword id="KW-0520">NAD</keyword>
<keyword id="KW-0521">NADP</keyword>
<keyword id="KW-0547">Nucleotide-binding</keyword>
<keyword id="KW-0808">Transferase</keyword>
<gene>
    <name evidence="1" type="primary">nadK</name>
    <name type="ordered locus">HPSH_07935</name>
</gene>
<proteinExistence type="inferred from homology"/>
<comment type="function">
    <text evidence="1">Involved in the regulation of the intracellular balance of NAD and NADP, and is a key enzyme in the biosynthesis of NADP. Catalyzes specifically the phosphorylation on 2'-hydroxyl of the adenosine moiety of NAD to yield NADP.</text>
</comment>
<comment type="catalytic activity">
    <reaction evidence="1">
        <text>NAD(+) + ATP = ADP + NADP(+) + H(+)</text>
        <dbReference type="Rhea" id="RHEA:18629"/>
        <dbReference type="ChEBI" id="CHEBI:15378"/>
        <dbReference type="ChEBI" id="CHEBI:30616"/>
        <dbReference type="ChEBI" id="CHEBI:57540"/>
        <dbReference type="ChEBI" id="CHEBI:58349"/>
        <dbReference type="ChEBI" id="CHEBI:456216"/>
        <dbReference type="EC" id="2.7.1.23"/>
    </reaction>
</comment>
<comment type="cofactor">
    <cofactor evidence="1">
        <name>a divalent metal cation</name>
        <dbReference type="ChEBI" id="CHEBI:60240"/>
    </cofactor>
</comment>
<comment type="subcellular location">
    <subcellularLocation>
        <location evidence="1">Cytoplasm</location>
    </subcellularLocation>
</comment>
<comment type="similarity">
    <text evidence="1">Belongs to the NAD kinase family.</text>
</comment>
<organism>
    <name type="scientific">Helicobacter pylori (strain Shi470)</name>
    <dbReference type="NCBI Taxonomy" id="512562"/>
    <lineage>
        <taxon>Bacteria</taxon>
        <taxon>Pseudomonadati</taxon>
        <taxon>Campylobacterota</taxon>
        <taxon>Epsilonproteobacteria</taxon>
        <taxon>Campylobacterales</taxon>
        <taxon>Helicobacteraceae</taxon>
        <taxon>Helicobacter</taxon>
    </lineage>
</organism>
<reference key="1">
    <citation type="submission" date="2008-05" db="EMBL/GenBank/DDBJ databases">
        <title>Genome sequence of Helicobacter pylori from the remote Amazon: traces of Asian ancestry of the first Americans.</title>
        <authorList>
            <person name="Kersulyte D."/>
            <person name="Kalia A."/>
            <person name="Gilman R.H."/>
            <person name="Berg D.E."/>
        </authorList>
    </citation>
    <scope>NUCLEOTIDE SEQUENCE [LARGE SCALE GENOMIC DNA]</scope>
    <source>
        <strain>Shi470</strain>
    </source>
</reference>
<dbReference type="EC" id="2.7.1.23" evidence="1"/>
<dbReference type="EMBL" id="CP001072">
    <property type="protein sequence ID" value="ACD48972.1"/>
    <property type="molecule type" value="Genomic_DNA"/>
</dbReference>
<dbReference type="RefSeq" id="WP_012443454.1">
    <property type="nucleotide sequence ID" value="NC_010698.2"/>
</dbReference>
<dbReference type="SMR" id="B2UVU0"/>
<dbReference type="KEGG" id="hps:HPSH_07935"/>
<dbReference type="HOGENOM" id="CLU_008831_0_3_7"/>
<dbReference type="GO" id="GO:0005737">
    <property type="term" value="C:cytoplasm"/>
    <property type="evidence" value="ECO:0007669"/>
    <property type="project" value="UniProtKB-SubCell"/>
</dbReference>
<dbReference type="GO" id="GO:0005524">
    <property type="term" value="F:ATP binding"/>
    <property type="evidence" value="ECO:0007669"/>
    <property type="project" value="UniProtKB-KW"/>
</dbReference>
<dbReference type="GO" id="GO:0046872">
    <property type="term" value="F:metal ion binding"/>
    <property type="evidence" value="ECO:0007669"/>
    <property type="project" value="UniProtKB-UniRule"/>
</dbReference>
<dbReference type="GO" id="GO:0051287">
    <property type="term" value="F:NAD binding"/>
    <property type="evidence" value="ECO:0007669"/>
    <property type="project" value="UniProtKB-ARBA"/>
</dbReference>
<dbReference type="GO" id="GO:0003951">
    <property type="term" value="F:NAD+ kinase activity"/>
    <property type="evidence" value="ECO:0007669"/>
    <property type="project" value="UniProtKB-UniRule"/>
</dbReference>
<dbReference type="GO" id="GO:0019674">
    <property type="term" value="P:NAD metabolic process"/>
    <property type="evidence" value="ECO:0007669"/>
    <property type="project" value="InterPro"/>
</dbReference>
<dbReference type="GO" id="GO:0006741">
    <property type="term" value="P:NADP biosynthetic process"/>
    <property type="evidence" value="ECO:0007669"/>
    <property type="project" value="UniProtKB-UniRule"/>
</dbReference>
<dbReference type="Gene3D" id="3.40.50.10330">
    <property type="entry name" value="Probable inorganic polyphosphate/atp-NAD kinase, domain 1"/>
    <property type="match status" value="1"/>
</dbReference>
<dbReference type="Gene3D" id="2.60.200.30">
    <property type="entry name" value="Probable inorganic polyphosphate/atp-NAD kinase, domain 2"/>
    <property type="match status" value="1"/>
</dbReference>
<dbReference type="HAMAP" id="MF_00361">
    <property type="entry name" value="NAD_kinase"/>
    <property type="match status" value="1"/>
</dbReference>
<dbReference type="InterPro" id="IPR017438">
    <property type="entry name" value="ATP-NAD_kinase_N"/>
</dbReference>
<dbReference type="InterPro" id="IPR017437">
    <property type="entry name" value="ATP-NAD_kinase_PpnK-typ_C"/>
</dbReference>
<dbReference type="InterPro" id="IPR016064">
    <property type="entry name" value="NAD/diacylglycerol_kinase_sf"/>
</dbReference>
<dbReference type="InterPro" id="IPR002504">
    <property type="entry name" value="NADK"/>
</dbReference>
<dbReference type="PANTHER" id="PTHR20275">
    <property type="entry name" value="NAD KINASE"/>
    <property type="match status" value="1"/>
</dbReference>
<dbReference type="PANTHER" id="PTHR20275:SF0">
    <property type="entry name" value="NAD KINASE"/>
    <property type="match status" value="1"/>
</dbReference>
<dbReference type="Pfam" id="PF01513">
    <property type="entry name" value="NAD_kinase"/>
    <property type="match status" value="1"/>
</dbReference>
<dbReference type="Pfam" id="PF20143">
    <property type="entry name" value="NAD_kinase_C"/>
    <property type="match status" value="1"/>
</dbReference>
<dbReference type="SUPFAM" id="SSF111331">
    <property type="entry name" value="NAD kinase/diacylglycerol kinase-like"/>
    <property type="match status" value="1"/>
</dbReference>
<name>NADK_HELPS</name>
<evidence type="ECO:0000255" key="1">
    <source>
        <dbReference type="HAMAP-Rule" id="MF_00361"/>
    </source>
</evidence>
<protein>
    <recommendedName>
        <fullName evidence="1">NAD kinase</fullName>
        <ecNumber evidence="1">2.7.1.23</ecNumber>
    </recommendedName>
    <alternativeName>
        <fullName evidence="1">ATP-dependent NAD kinase</fullName>
    </alternativeName>
</protein>
<feature type="chain" id="PRO_1000120868" description="NAD kinase">
    <location>
        <begin position="1"/>
        <end position="284"/>
    </location>
</feature>
<feature type="active site" description="Proton acceptor" evidence="1">
    <location>
        <position position="70"/>
    </location>
</feature>
<feature type="binding site" evidence="1">
    <location>
        <begin position="70"/>
        <end position="71"/>
    </location>
    <ligand>
        <name>NAD(+)</name>
        <dbReference type="ChEBI" id="CHEBI:57540"/>
    </ligand>
</feature>
<feature type="binding site" evidence="1">
    <location>
        <begin position="139"/>
        <end position="140"/>
    </location>
    <ligand>
        <name>NAD(+)</name>
        <dbReference type="ChEBI" id="CHEBI:57540"/>
    </ligand>
</feature>
<feature type="binding site" evidence="1">
    <location>
        <position position="167"/>
    </location>
    <ligand>
        <name>NAD(+)</name>
        <dbReference type="ChEBI" id="CHEBI:57540"/>
    </ligand>
</feature>
<feature type="binding site" evidence="1">
    <location>
        <position position="169"/>
    </location>
    <ligand>
        <name>NAD(+)</name>
        <dbReference type="ChEBI" id="CHEBI:57540"/>
    </ligand>
</feature>
<feature type="binding site" evidence="1">
    <location>
        <position position="177"/>
    </location>
    <ligand>
        <name>NAD(+)</name>
        <dbReference type="ChEBI" id="CHEBI:57540"/>
    </ligand>
</feature>
<feature type="binding site" evidence="1">
    <location>
        <begin position="180"/>
        <end position="185"/>
    </location>
    <ligand>
        <name>NAD(+)</name>
        <dbReference type="ChEBI" id="CHEBI:57540"/>
    </ligand>
</feature>
<feature type="binding site" evidence="1">
    <location>
        <position position="236"/>
    </location>
    <ligand>
        <name>NAD(+)</name>
        <dbReference type="ChEBI" id="CHEBI:57540"/>
    </ligand>
</feature>
<sequence>MKDSHQTIGVFVRPTHYQNPLFEKLERAKEWVLKLLEDEGFESFMIDGLDGAKDERLIEKAYAFLCLGGDGTILGALRMTHSYNKPCFGVRIGNLGFLSAVELNGLKGFLQDLKQDKIKLEEHLALEGRIGKTSFYAINEIVIAKKKALGVLDIQAYVGHTPFNTYKGDGLIIATPLGSTAYNLSAHGPIVHALSQSYILTPLCDFSLTQRPLVLGAEFCLNFCAHEDALVVIDGQATYDLKANQPLYIQKSPTTTKLLQKNSRDYFKVLKEKLLWGESPSKKR</sequence>